<comment type="similarity">
    <text evidence="3">Belongs to the LovG family.</text>
</comment>
<proteinExistence type="inferred from homology"/>
<reference key="1">
    <citation type="journal article" date="2007" name="Science">
        <title>Genome sequence of Aedes aegypti, a major arbovirus vector.</title>
        <authorList>
            <person name="Nene V."/>
            <person name="Wortman J.R."/>
            <person name="Lawson D."/>
            <person name="Haas B.J."/>
            <person name="Kodira C.D."/>
            <person name="Tu Z.J."/>
            <person name="Loftus B.J."/>
            <person name="Xi Z."/>
            <person name="Megy K."/>
            <person name="Grabherr M."/>
            <person name="Ren Q."/>
            <person name="Zdobnov E.M."/>
            <person name="Lobo N.F."/>
            <person name="Campbell K.S."/>
            <person name="Brown S.E."/>
            <person name="Bonaldo M.F."/>
            <person name="Zhu J."/>
            <person name="Sinkins S.P."/>
            <person name="Hogenkamp D.G."/>
            <person name="Amedeo P."/>
            <person name="Arensburger P."/>
            <person name="Atkinson P.W."/>
            <person name="Bidwell S.L."/>
            <person name="Biedler J."/>
            <person name="Birney E."/>
            <person name="Bruggner R.V."/>
            <person name="Costas J."/>
            <person name="Coy M.R."/>
            <person name="Crabtree J."/>
            <person name="Crawford M."/>
            <person name="DeBruyn B."/>
            <person name="DeCaprio D."/>
            <person name="Eiglmeier K."/>
            <person name="Eisenstadt E."/>
            <person name="El-Dorry H."/>
            <person name="Gelbart W.M."/>
            <person name="Gomes S.L."/>
            <person name="Hammond M."/>
            <person name="Hannick L.I."/>
            <person name="Hogan J.R."/>
            <person name="Holmes M.H."/>
            <person name="Jaffe D."/>
            <person name="Johnston S.J."/>
            <person name="Kennedy R.C."/>
            <person name="Koo H."/>
            <person name="Kravitz S."/>
            <person name="Kriventseva E.V."/>
            <person name="Kulp D."/>
            <person name="Labutti K."/>
            <person name="Lee E."/>
            <person name="Li S."/>
            <person name="Lovin D.D."/>
            <person name="Mao C."/>
            <person name="Mauceli E."/>
            <person name="Menck C.F."/>
            <person name="Miller J.R."/>
            <person name="Montgomery P."/>
            <person name="Mori A."/>
            <person name="Nascimento A.L."/>
            <person name="Naveira H.F."/>
            <person name="Nusbaum C."/>
            <person name="O'Leary S.B."/>
            <person name="Orvis J."/>
            <person name="Pertea M."/>
            <person name="Quesneville H."/>
            <person name="Reidenbach K.R."/>
            <person name="Rogers Y.-H.C."/>
            <person name="Roth C.W."/>
            <person name="Schneider J.R."/>
            <person name="Schatz M."/>
            <person name="Shumway M."/>
            <person name="Stanke M."/>
            <person name="Stinson E.O."/>
            <person name="Tubio J.M.C."/>
            <person name="Vanzee J.P."/>
            <person name="Verjovski-Almeida S."/>
            <person name="Werner D."/>
            <person name="White O.R."/>
            <person name="Wyder S."/>
            <person name="Zeng Q."/>
            <person name="Zhao Q."/>
            <person name="Zhao Y."/>
            <person name="Hill C.A."/>
            <person name="Raikhel A.S."/>
            <person name="Soares M.B."/>
            <person name="Knudson D.L."/>
            <person name="Lee N.H."/>
            <person name="Galagan J."/>
            <person name="Salzberg S.L."/>
            <person name="Paulsen I.T."/>
            <person name="Dimopoulos G."/>
            <person name="Collins F.H."/>
            <person name="Bruce B."/>
            <person name="Fraser-Liggett C.M."/>
            <person name="Severson D.W."/>
        </authorList>
    </citation>
    <scope>NUCLEOTIDE SEQUENCE [LARGE SCALE GENOMIC DNA]</scope>
    <source>
        <strain>LVPib12</strain>
    </source>
</reference>
<evidence type="ECO:0000250" key="1">
    <source>
        <dbReference type="UniProtKB" id="P38777"/>
    </source>
</evidence>
<evidence type="ECO:0000256" key="2">
    <source>
        <dbReference type="SAM" id="MobiDB-lite"/>
    </source>
</evidence>
<evidence type="ECO:0000305" key="3"/>
<keyword id="KW-0378">Hydrolase</keyword>
<keyword id="KW-1185">Reference proteome</keyword>
<accession>Q0C7C4</accession>
<sequence>MMANETAAKSTKSSPTPAVEPESKLKILALHGYRQNGDGFKSKLGSFRKFIGKHAELVFVTAPHIAPPLPDSEAGTEPDPAQRSWWFNKDDGTFKGTNKNGPAIGFEDSLKLVEKVWKQEQCCGLLGFSQGACFVGLLCDLSARGMTSIKPEFAVLSSGFRSGSLVHLNCYETKVQIPSLHIYGEADEIIPKEMSMALADTFTDPQILTHPGGHFLPAQASQKQTYVEFFRERLQFHLEAQEIENATAANSILVDDSGPAGNGVHDDDDDDDDSD</sequence>
<dbReference type="EC" id="3.1.2.-" evidence="3"/>
<dbReference type="EMBL" id="CH477186">
    <property type="protein sequence ID" value="EAT48902.1"/>
    <property type="molecule type" value="Genomic_DNA"/>
</dbReference>
<dbReference type="SMR" id="Q0C7C4"/>
<dbReference type="FunCoup" id="Q0C7C4">
    <property type="interactions" value="1132"/>
</dbReference>
<dbReference type="STRING" id="7159.Q0C7C4"/>
<dbReference type="ESTHER" id="aedae-u483">
    <property type="family name" value="FSH1"/>
</dbReference>
<dbReference type="PaxDb" id="7159-AAEL000016-PA"/>
<dbReference type="EnsemblMetazoa" id="AAEL000016-RA">
    <property type="protein sequence ID" value="AAEL000016-PA"/>
    <property type="gene ID" value="AAEL000016"/>
</dbReference>
<dbReference type="GeneID" id="5563630"/>
<dbReference type="KEGG" id="aag:5563630"/>
<dbReference type="VEuPathDB" id="VectorBase:AAEL000016"/>
<dbReference type="eggNOG" id="KOG2551">
    <property type="taxonomic scope" value="Eukaryota"/>
</dbReference>
<dbReference type="HOGENOM" id="CLU_051938_2_3_1"/>
<dbReference type="InParanoid" id="Q0C7C4"/>
<dbReference type="OMA" id="EEPRGWW"/>
<dbReference type="OrthoDB" id="414698at2759"/>
<dbReference type="PhylomeDB" id="Q0C7C4"/>
<dbReference type="Proteomes" id="UP000008820">
    <property type="component" value="Chromosome 1"/>
</dbReference>
<dbReference type="Proteomes" id="UP000682892">
    <property type="component" value="Chromosome 1"/>
</dbReference>
<dbReference type="GO" id="GO:0005737">
    <property type="term" value="C:cytoplasm"/>
    <property type="evidence" value="ECO:0007669"/>
    <property type="project" value="TreeGrafter"/>
</dbReference>
<dbReference type="GO" id="GO:0005634">
    <property type="term" value="C:nucleus"/>
    <property type="evidence" value="ECO:0007669"/>
    <property type="project" value="TreeGrafter"/>
</dbReference>
<dbReference type="GO" id="GO:0016787">
    <property type="term" value="F:hydrolase activity"/>
    <property type="evidence" value="ECO:0007669"/>
    <property type="project" value="UniProtKB-KW"/>
</dbReference>
<dbReference type="GO" id="GO:0032526">
    <property type="term" value="P:response to retinoic acid"/>
    <property type="evidence" value="ECO:0007669"/>
    <property type="project" value="TreeGrafter"/>
</dbReference>
<dbReference type="FunFam" id="3.40.50.1820:FF:000073">
    <property type="entry name" value="esterase OVCA2 isoform X6"/>
    <property type="match status" value="1"/>
</dbReference>
<dbReference type="Gene3D" id="3.40.50.1820">
    <property type="entry name" value="alpha/beta hydrolase"/>
    <property type="match status" value="1"/>
</dbReference>
<dbReference type="InterPro" id="IPR029058">
    <property type="entry name" value="AB_hydrolase_fold"/>
</dbReference>
<dbReference type="InterPro" id="IPR005645">
    <property type="entry name" value="FSH-like_dom"/>
</dbReference>
<dbReference type="InterPro" id="IPR050593">
    <property type="entry name" value="LovG"/>
</dbReference>
<dbReference type="PANTHER" id="PTHR48070">
    <property type="entry name" value="ESTERASE OVCA2"/>
    <property type="match status" value="1"/>
</dbReference>
<dbReference type="PANTHER" id="PTHR48070:SF6">
    <property type="entry name" value="ESTERASE OVCA2"/>
    <property type="match status" value="1"/>
</dbReference>
<dbReference type="Pfam" id="PF03959">
    <property type="entry name" value="FSH1"/>
    <property type="match status" value="1"/>
</dbReference>
<dbReference type="SUPFAM" id="SSF53474">
    <property type="entry name" value="alpha/beta-Hydrolases"/>
    <property type="match status" value="1"/>
</dbReference>
<gene>
    <name type="ORF">AAEL000016</name>
</gene>
<name>LOVG_AEDAE</name>
<organism>
    <name type="scientific">Aedes aegypti</name>
    <name type="common">Yellowfever mosquito</name>
    <name type="synonym">Culex aegypti</name>
    <dbReference type="NCBI Taxonomy" id="7159"/>
    <lineage>
        <taxon>Eukaryota</taxon>
        <taxon>Metazoa</taxon>
        <taxon>Ecdysozoa</taxon>
        <taxon>Arthropoda</taxon>
        <taxon>Hexapoda</taxon>
        <taxon>Insecta</taxon>
        <taxon>Pterygota</taxon>
        <taxon>Neoptera</taxon>
        <taxon>Endopterygota</taxon>
        <taxon>Diptera</taxon>
        <taxon>Nematocera</taxon>
        <taxon>Culicoidea</taxon>
        <taxon>Culicidae</taxon>
        <taxon>Culicinae</taxon>
        <taxon>Aedini</taxon>
        <taxon>Aedes</taxon>
        <taxon>Stegomyia</taxon>
    </lineage>
</organism>
<protein>
    <recommendedName>
        <fullName>Esterase AAEL000016</fullName>
        <ecNumber evidence="3">3.1.2.-</ecNumber>
    </recommendedName>
</protein>
<feature type="chain" id="PRO_0000300880" description="Esterase AAEL000016">
    <location>
        <begin position="1"/>
        <end position="275"/>
    </location>
</feature>
<feature type="region of interest" description="Disordered" evidence="2">
    <location>
        <begin position="1"/>
        <end position="21"/>
    </location>
</feature>
<feature type="region of interest" description="Disordered" evidence="2">
    <location>
        <begin position="253"/>
        <end position="275"/>
    </location>
</feature>
<feature type="compositionally biased region" description="Polar residues" evidence="2">
    <location>
        <begin position="7"/>
        <end position="16"/>
    </location>
</feature>
<feature type="compositionally biased region" description="Acidic residues" evidence="2">
    <location>
        <begin position="266"/>
        <end position="275"/>
    </location>
</feature>
<feature type="active site" description="Charge relay system" evidence="1">
    <location>
        <position position="129"/>
    </location>
</feature>
<feature type="active site" description="Charge relay system" evidence="1">
    <location>
        <position position="187"/>
    </location>
</feature>
<feature type="active site" description="Charge relay system" evidence="1">
    <location>
        <position position="214"/>
    </location>
</feature>